<keyword id="KW-1015">Disulfide bond</keyword>
<keyword id="KW-0325">Glycoprotein</keyword>
<keyword id="KW-0481">Metalloenzyme inhibitor</keyword>
<keyword id="KW-0483">Metalloprotease inhibitor</keyword>
<keyword id="KW-0646">Protease inhibitor</keyword>
<keyword id="KW-0677">Repeat</keyword>
<keyword id="KW-0964">Secreted</keyword>
<keyword id="KW-0732">Signal</keyword>
<proteinExistence type="evidence at transcript level"/>
<feature type="signal peptide" evidence="2">
    <location>
        <begin position="1"/>
        <end position="19"/>
    </location>
</feature>
<feature type="chain" id="PRO_5000052210" description="Antihemorrhagic factor cHLP-A">
    <location>
        <begin position="20"/>
        <end position="324"/>
    </location>
</feature>
<feature type="domain" description="Cystatin fetuin-A-type 1" evidence="3">
    <location>
        <begin position="21"/>
        <end position="130"/>
    </location>
</feature>
<feature type="domain" description="Cystatin fetuin-A-type 2" evidence="3">
    <location>
        <begin position="141"/>
        <end position="254"/>
    </location>
</feature>
<feature type="site" description="Cleavage; by trypsin" evidence="1">
    <location>
        <begin position="140"/>
        <end position="141"/>
    </location>
</feature>
<feature type="glycosylation site" description="N-linked (GlcNAc...) asparagine" evidence="2">
    <location>
        <position position="204"/>
    </location>
</feature>
<feature type="glycosylation site" description="N-linked (GlcNAc...) asparagine" evidence="2">
    <location>
        <position position="282"/>
    </location>
</feature>
<feature type="disulfide bond" evidence="3">
    <location>
        <begin position="28"/>
        <end position="315"/>
    </location>
</feature>
<feature type="disulfide bond" evidence="3">
    <location>
        <begin position="85"/>
        <end position="96"/>
    </location>
</feature>
<feature type="disulfide bond" evidence="3">
    <location>
        <begin position="110"/>
        <end position="129"/>
    </location>
</feature>
<feature type="disulfide bond" evidence="3">
    <location>
        <begin position="143"/>
        <end position="146"/>
    </location>
</feature>
<feature type="disulfide bond" evidence="3">
    <location>
        <begin position="205"/>
        <end position="217"/>
    </location>
</feature>
<feature type="disulfide bond" evidence="3">
    <location>
        <begin position="230"/>
        <end position="253"/>
    </location>
</feature>
<dbReference type="EMBL" id="AB200170">
    <property type="protein sequence ID" value="BAD88537.1"/>
    <property type="molecule type" value="mRNA"/>
</dbReference>
<dbReference type="SMR" id="Q5KQS3"/>
<dbReference type="MEROPS" id="I25.026"/>
<dbReference type="MEROPS" id="I25.042"/>
<dbReference type="GO" id="GO:0072562">
    <property type="term" value="C:blood microparticle"/>
    <property type="evidence" value="ECO:0007669"/>
    <property type="project" value="TreeGrafter"/>
</dbReference>
<dbReference type="GO" id="GO:0031012">
    <property type="term" value="C:extracellular matrix"/>
    <property type="evidence" value="ECO:0007669"/>
    <property type="project" value="TreeGrafter"/>
</dbReference>
<dbReference type="GO" id="GO:0004869">
    <property type="term" value="F:cysteine-type endopeptidase inhibitor activity"/>
    <property type="evidence" value="ECO:0007669"/>
    <property type="project" value="InterPro"/>
</dbReference>
<dbReference type="CDD" id="cd00042">
    <property type="entry name" value="CY"/>
    <property type="match status" value="1"/>
</dbReference>
<dbReference type="FunFam" id="3.10.450.10:FF:000002">
    <property type="entry name" value="Kininogen 1"/>
    <property type="match status" value="1"/>
</dbReference>
<dbReference type="Gene3D" id="3.10.450.10">
    <property type="match status" value="2"/>
</dbReference>
<dbReference type="InterPro" id="IPR000010">
    <property type="entry name" value="Cystatin_dom"/>
</dbReference>
<dbReference type="InterPro" id="IPR025760">
    <property type="entry name" value="Cystatin_Fetuin_A"/>
</dbReference>
<dbReference type="InterPro" id="IPR046350">
    <property type="entry name" value="Cystatin_sf"/>
</dbReference>
<dbReference type="InterPro" id="IPR050735">
    <property type="entry name" value="Kininogen_Fetuin_HRG"/>
</dbReference>
<dbReference type="InterPro" id="IPR001363">
    <property type="entry name" value="Prot_inh_fetuin_CS"/>
</dbReference>
<dbReference type="PANTHER" id="PTHR13814:SF6">
    <property type="entry name" value="ALPHA-2-HS-GLYCOPROTEIN"/>
    <property type="match status" value="1"/>
</dbReference>
<dbReference type="PANTHER" id="PTHR13814">
    <property type="entry name" value="FETUIN"/>
    <property type="match status" value="1"/>
</dbReference>
<dbReference type="Pfam" id="PF00031">
    <property type="entry name" value="Cystatin"/>
    <property type="match status" value="1"/>
</dbReference>
<dbReference type="SMART" id="SM00043">
    <property type="entry name" value="CY"/>
    <property type="match status" value="2"/>
</dbReference>
<dbReference type="SUPFAM" id="SSF54403">
    <property type="entry name" value="Cystatin/monellin"/>
    <property type="match status" value="2"/>
</dbReference>
<dbReference type="PROSITE" id="PS51529">
    <property type="entry name" value="CYSTATIN_FETUIN_A"/>
    <property type="match status" value="2"/>
</dbReference>
<dbReference type="PROSITE" id="PS01255">
    <property type="entry name" value="FETUIN_2"/>
    <property type="match status" value="1"/>
</dbReference>
<evidence type="ECO:0000250" key="1"/>
<evidence type="ECO:0000255" key="2"/>
<evidence type="ECO:0000255" key="3">
    <source>
        <dbReference type="PROSITE-ProRule" id="PRU00861"/>
    </source>
</evidence>
<comment type="function">
    <text evidence="1">Potent inhibitor of hemorrhagic activity but also proteolytic activities. Inhibition occurs by formation of a non-covalent complex between this protein and the proteinases at their metalloproteinase domains (By similarity).</text>
</comment>
<comment type="subunit">
    <text evidence="1">Homodimer.</text>
</comment>
<comment type="subcellular location">
    <subcellularLocation>
        <location evidence="1">Secreted</location>
    </subcellularLocation>
</comment>
<comment type="tissue specificity">
    <text>Expressed by the liver.</text>
</comment>
<comment type="similarity">
    <text evidence="3">Belongs to the fetuin family.</text>
</comment>
<organism>
    <name type="scientific">Gloydius brevicauda</name>
    <name type="common">Korean slamosa snake</name>
    <name type="synonym">Agkistrodon halys brevicaudus</name>
    <dbReference type="NCBI Taxonomy" id="3148161"/>
    <lineage>
        <taxon>Eukaryota</taxon>
        <taxon>Metazoa</taxon>
        <taxon>Chordata</taxon>
        <taxon>Craniata</taxon>
        <taxon>Vertebrata</taxon>
        <taxon>Euteleostomi</taxon>
        <taxon>Lepidosauria</taxon>
        <taxon>Squamata</taxon>
        <taxon>Bifurcata</taxon>
        <taxon>Unidentata</taxon>
        <taxon>Episquamata</taxon>
        <taxon>Toxicofera</taxon>
        <taxon>Serpentes</taxon>
        <taxon>Colubroidea</taxon>
        <taxon>Viperidae</taxon>
        <taxon>Crotalinae</taxon>
        <taxon>Gloydius</taxon>
    </lineage>
</organism>
<name>FETCA_GLOBR</name>
<accession>Q5KQS3</accession>
<protein>
    <recommendedName>
        <fullName>Antihemorrhagic factor cHLP-A</fullName>
    </recommendedName>
    <alternativeName>
        <fullName>Chinese mamushi HSF-like protein A</fullName>
    </alternativeName>
</protein>
<sequence length="324" mass="36585">MNSLVALVLLGQIIGSTLSFQLGPNMDCNTKGTKDWADIGVRYINEHKLDGYKNALNIIKIFRLLPSDGRSVIVHFKLNLLETKCHVLDPTPVENCAVRQQHNHAVEMDCNVRIIHDIATFEDEVFVKCKSTPDSVENVRRNCPKCPILLPPNDPHVVDSVEYVLNKHNEKLSGHVYEVLEISRGQHKYEPEAFYVEFAIVEVNCTAQEARDGHHQCHPYTAGEDHIAFCRATVFRSHASLEKPKDENFESDCVILDVKEGHAHSHLIQQHIEKYSTSPGHNSTDEYVVECPVAFVEKEVPTDMSDHDTPPVKGCPGRVLHFQL</sequence>
<reference key="1">
    <citation type="submission" date="2005-01" db="EMBL/GenBank/DDBJ databases">
        <title>A fetuin family antihemorrhagic factor and its homologous proteins in Chinese mamushi snake serum.</title>
        <authorList>
            <person name="Aoki N."/>
            <person name="Tsutsumi K."/>
            <person name="Deshimaru M."/>
            <person name="Terada S."/>
        </authorList>
    </citation>
    <scope>NUCLEOTIDE SEQUENCE [MRNA]</scope>
    <source>
        <tissue>Liver</tissue>
    </source>
</reference>